<evidence type="ECO:0000255" key="1">
    <source>
        <dbReference type="HAMAP-Rule" id="MF_01603"/>
    </source>
</evidence>
<protein>
    <recommendedName>
        <fullName evidence="1">Bifunctional protein HldE</fullName>
    </recommendedName>
    <domain>
        <recommendedName>
            <fullName evidence="1">D-beta-D-heptose 7-phosphate kinase</fullName>
            <ecNumber evidence="1">2.7.1.167</ecNumber>
        </recommendedName>
        <alternativeName>
            <fullName evidence="1">D-beta-D-heptose 7-phosphotransferase</fullName>
        </alternativeName>
        <alternativeName>
            <fullName evidence="1">D-glycero-beta-D-manno-heptose-7-phosphate kinase</fullName>
        </alternativeName>
    </domain>
    <domain>
        <recommendedName>
            <fullName evidence="1">D-beta-D-heptose 1-phosphate adenylyltransferase</fullName>
            <ecNumber evidence="1">2.7.7.70</ecNumber>
        </recommendedName>
        <alternativeName>
            <fullName evidence="1">D-glycero-beta-D-manno-heptose 1-phosphate adenylyltransferase</fullName>
        </alternativeName>
    </domain>
</protein>
<gene>
    <name evidence="1" type="primary">hldE</name>
    <name type="ordered locus">GbCGDNIH1_0513</name>
</gene>
<organism>
    <name type="scientific">Granulibacter bethesdensis (strain ATCC BAA-1260 / CGDNIH1)</name>
    <dbReference type="NCBI Taxonomy" id="391165"/>
    <lineage>
        <taxon>Bacteria</taxon>
        <taxon>Pseudomonadati</taxon>
        <taxon>Pseudomonadota</taxon>
        <taxon>Alphaproteobacteria</taxon>
        <taxon>Acetobacterales</taxon>
        <taxon>Acetobacteraceae</taxon>
        <taxon>Granulibacter</taxon>
    </lineage>
</organism>
<proteinExistence type="inferred from homology"/>
<keyword id="KW-0067">ATP-binding</keyword>
<keyword id="KW-0119">Carbohydrate metabolism</keyword>
<keyword id="KW-0418">Kinase</keyword>
<keyword id="KW-0511">Multifunctional enzyme</keyword>
<keyword id="KW-0547">Nucleotide-binding</keyword>
<keyword id="KW-0548">Nucleotidyltransferase</keyword>
<keyword id="KW-1185">Reference proteome</keyword>
<keyword id="KW-0808">Transferase</keyword>
<comment type="function">
    <text evidence="1">Catalyzes the phosphorylation of D-glycero-D-manno-heptose 7-phosphate at the C-1 position to selectively form D-glycero-beta-D-manno-heptose-1,7-bisphosphate.</text>
</comment>
<comment type="function">
    <text evidence="1">Catalyzes the ADP transfer from ATP to D-glycero-beta-D-manno-heptose 1-phosphate, yielding ADP-D-glycero-beta-D-manno-heptose.</text>
</comment>
<comment type="catalytic activity">
    <reaction evidence="1">
        <text>D-glycero-beta-D-manno-heptose 7-phosphate + ATP = D-glycero-beta-D-manno-heptose 1,7-bisphosphate + ADP + H(+)</text>
        <dbReference type="Rhea" id="RHEA:27473"/>
        <dbReference type="ChEBI" id="CHEBI:15378"/>
        <dbReference type="ChEBI" id="CHEBI:30616"/>
        <dbReference type="ChEBI" id="CHEBI:60204"/>
        <dbReference type="ChEBI" id="CHEBI:60208"/>
        <dbReference type="ChEBI" id="CHEBI:456216"/>
        <dbReference type="EC" id="2.7.1.167"/>
    </reaction>
</comment>
<comment type="catalytic activity">
    <reaction evidence="1">
        <text>D-glycero-beta-D-manno-heptose 1-phosphate + ATP + H(+) = ADP-D-glycero-beta-D-manno-heptose + diphosphate</text>
        <dbReference type="Rhea" id="RHEA:27465"/>
        <dbReference type="ChEBI" id="CHEBI:15378"/>
        <dbReference type="ChEBI" id="CHEBI:30616"/>
        <dbReference type="ChEBI" id="CHEBI:33019"/>
        <dbReference type="ChEBI" id="CHEBI:59967"/>
        <dbReference type="ChEBI" id="CHEBI:61593"/>
        <dbReference type="EC" id="2.7.7.70"/>
    </reaction>
</comment>
<comment type="pathway">
    <text evidence="1">Nucleotide-sugar biosynthesis; ADP-L-glycero-beta-D-manno-heptose biosynthesis; ADP-L-glycero-beta-D-manno-heptose from D-glycero-beta-D-manno-heptose 7-phosphate: step 1/4.</text>
</comment>
<comment type="pathway">
    <text evidence="1">Nucleotide-sugar biosynthesis; ADP-L-glycero-beta-D-manno-heptose biosynthesis; ADP-L-glycero-beta-D-manno-heptose from D-glycero-beta-D-manno-heptose 7-phosphate: step 3/4.</text>
</comment>
<comment type="subunit">
    <text evidence="1">Homodimer.</text>
</comment>
<comment type="similarity">
    <text evidence="1">In the N-terminal section; belongs to the carbohydrate kinase PfkB family.</text>
</comment>
<comment type="similarity">
    <text evidence="1">In the C-terminal section; belongs to the cytidylyltransferase family.</text>
</comment>
<feature type="chain" id="PRO_0000291673" description="Bifunctional protein HldE">
    <location>
        <begin position="1"/>
        <end position="485"/>
    </location>
</feature>
<feature type="region of interest" description="Ribokinase">
    <location>
        <begin position="1"/>
        <end position="326"/>
    </location>
</feature>
<feature type="region of interest" description="Cytidylyltransferase">
    <location>
        <begin position="354"/>
        <end position="485"/>
    </location>
</feature>
<feature type="active site" evidence="1">
    <location>
        <position position="271"/>
    </location>
</feature>
<feature type="binding site" evidence="1">
    <location>
        <begin position="195"/>
        <end position="198"/>
    </location>
    <ligand>
        <name>ATP</name>
        <dbReference type="ChEBI" id="CHEBI:30616"/>
    </ligand>
</feature>
<accession>Q0BUU1</accession>
<name>HLDE_GRABC</name>
<dbReference type="EC" id="2.7.1.167" evidence="1"/>
<dbReference type="EC" id="2.7.7.70" evidence="1"/>
<dbReference type="EMBL" id="CP000394">
    <property type="protein sequence ID" value="ABI61411.1"/>
    <property type="molecule type" value="Genomic_DNA"/>
</dbReference>
<dbReference type="RefSeq" id="WP_011631221.1">
    <property type="nucleotide sequence ID" value="NC_008343.2"/>
</dbReference>
<dbReference type="SMR" id="Q0BUU1"/>
<dbReference type="STRING" id="391165.GbCGDNIH1_0513"/>
<dbReference type="KEGG" id="gbe:GbCGDNIH1_0513"/>
<dbReference type="eggNOG" id="COG0615">
    <property type="taxonomic scope" value="Bacteria"/>
</dbReference>
<dbReference type="eggNOG" id="COG2870">
    <property type="taxonomic scope" value="Bacteria"/>
</dbReference>
<dbReference type="HOGENOM" id="CLU_021150_2_1_5"/>
<dbReference type="OrthoDB" id="9802794at2"/>
<dbReference type="UniPathway" id="UPA00356">
    <property type="reaction ID" value="UER00437"/>
</dbReference>
<dbReference type="UniPathway" id="UPA00356">
    <property type="reaction ID" value="UER00439"/>
</dbReference>
<dbReference type="Proteomes" id="UP000001963">
    <property type="component" value="Chromosome"/>
</dbReference>
<dbReference type="GO" id="GO:0005829">
    <property type="term" value="C:cytosol"/>
    <property type="evidence" value="ECO:0007669"/>
    <property type="project" value="TreeGrafter"/>
</dbReference>
<dbReference type="GO" id="GO:0005524">
    <property type="term" value="F:ATP binding"/>
    <property type="evidence" value="ECO:0007669"/>
    <property type="project" value="UniProtKB-UniRule"/>
</dbReference>
<dbReference type="GO" id="GO:0033785">
    <property type="term" value="F:heptose 7-phosphate kinase activity"/>
    <property type="evidence" value="ECO:0007669"/>
    <property type="project" value="UniProtKB-UniRule"/>
</dbReference>
<dbReference type="GO" id="GO:0033786">
    <property type="term" value="F:heptose-1-phosphate adenylyltransferase activity"/>
    <property type="evidence" value="ECO:0007669"/>
    <property type="project" value="UniProtKB-UniRule"/>
</dbReference>
<dbReference type="GO" id="GO:0016773">
    <property type="term" value="F:phosphotransferase activity, alcohol group as acceptor"/>
    <property type="evidence" value="ECO:0007669"/>
    <property type="project" value="InterPro"/>
</dbReference>
<dbReference type="GO" id="GO:0097171">
    <property type="term" value="P:ADP-L-glycero-beta-D-manno-heptose biosynthetic process"/>
    <property type="evidence" value="ECO:0007669"/>
    <property type="project" value="UniProtKB-UniPathway"/>
</dbReference>
<dbReference type="CDD" id="cd01172">
    <property type="entry name" value="RfaE_like"/>
    <property type="match status" value="1"/>
</dbReference>
<dbReference type="FunFam" id="3.40.1190.20:FF:000002">
    <property type="entry name" value="Bifunctional protein HldE"/>
    <property type="match status" value="1"/>
</dbReference>
<dbReference type="Gene3D" id="3.40.1190.20">
    <property type="match status" value="1"/>
</dbReference>
<dbReference type="Gene3D" id="3.40.50.620">
    <property type="entry name" value="HUPs"/>
    <property type="match status" value="1"/>
</dbReference>
<dbReference type="HAMAP" id="MF_01603">
    <property type="entry name" value="HldE"/>
    <property type="match status" value="1"/>
</dbReference>
<dbReference type="InterPro" id="IPR023030">
    <property type="entry name" value="Bifunc_HldE"/>
</dbReference>
<dbReference type="InterPro" id="IPR002173">
    <property type="entry name" value="Carboh/pur_kinase_PfkB_CS"/>
</dbReference>
<dbReference type="InterPro" id="IPR004821">
    <property type="entry name" value="Cyt_trans-like"/>
</dbReference>
<dbReference type="InterPro" id="IPR011611">
    <property type="entry name" value="PfkB_dom"/>
</dbReference>
<dbReference type="InterPro" id="IPR011913">
    <property type="entry name" value="RfaE_dom_I"/>
</dbReference>
<dbReference type="InterPro" id="IPR011914">
    <property type="entry name" value="RfaE_dom_II"/>
</dbReference>
<dbReference type="InterPro" id="IPR029056">
    <property type="entry name" value="Ribokinase-like"/>
</dbReference>
<dbReference type="InterPro" id="IPR014729">
    <property type="entry name" value="Rossmann-like_a/b/a_fold"/>
</dbReference>
<dbReference type="NCBIfam" id="TIGR00125">
    <property type="entry name" value="cyt_tran_rel"/>
    <property type="match status" value="1"/>
</dbReference>
<dbReference type="NCBIfam" id="TIGR02198">
    <property type="entry name" value="rfaE_dom_I"/>
    <property type="match status" value="1"/>
</dbReference>
<dbReference type="NCBIfam" id="TIGR02199">
    <property type="entry name" value="rfaE_dom_II"/>
    <property type="match status" value="1"/>
</dbReference>
<dbReference type="PANTHER" id="PTHR46969">
    <property type="entry name" value="BIFUNCTIONAL PROTEIN HLDE"/>
    <property type="match status" value="1"/>
</dbReference>
<dbReference type="PANTHER" id="PTHR46969:SF1">
    <property type="entry name" value="BIFUNCTIONAL PROTEIN HLDE"/>
    <property type="match status" value="1"/>
</dbReference>
<dbReference type="Pfam" id="PF01467">
    <property type="entry name" value="CTP_transf_like"/>
    <property type="match status" value="1"/>
</dbReference>
<dbReference type="Pfam" id="PF00294">
    <property type="entry name" value="PfkB"/>
    <property type="match status" value="1"/>
</dbReference>
<dbReference type="SUPFAM" id="SSF52374">
    <property type="entry name" value="Nucleotidylyl transferase"/>
    <property type="match status" value="1"/>
</dbReference>
<dbReference type="SUPFAM" id="SSF53613">
    <property type="entry name" value="Ribokinase-like"/>
    <property type="match status" value="1"/>
</dbReference>
<dbReference type="PROSITE" id="PS00583">
    <property type="entry name" value="PFKB_KINASES_1"/>
    <property type="match status" value="1"/>
</dbReference>
<sequence length="485" mass="51126">MDFSSTRVLCIGDVMLDRFMHGSVERISPEAPVPVLRITSTHSMLGGAGNVAHNIADLGGTAILVGLIGHDDTAIALRTHLERVPGIVNALVESPHRPTICKTRFLAAQQQVVRTDDESHLPTQPAEEMLLQTMVATHITECGAVILSDYGKGVLSPAVIKHVIGLARQAGIPVFVDPKRLDFSVYAGATCITPNVKELSAAAHQRADDEASVIAAARIVMQQAEGASILATRSEKGMMLIEAPAEGRDDIAIHTVPARAREVFDVSGAGDTVIATLALAHASGLTLESAMRISNAAAGVVVSKAGTATLNVDELRAELDESAISNGSTGSARSLGEARSLVKKWKQLGLTVGFTNGCFDILHAGHVSLLNEARTRCDRLIVAVNTDASVSRLKGPTRPINGFEDRCTVLAGLRSVDCVVGFQEDTPLSVISVLLPDRLFKGADYREEDVVGGDVVRAAGGKVELIDLVPGRSTTGIVKKISTLT</sequence>
<reference key="1">
    <citation type="journal article" date="2007" name="J. Bacteriol.">
        <title>Genome sequence analysis of the emerging human pathogenic acetic acid bacterium Granulibacter bethesdensis.</title>
        <authorList>
            <person name="Greenberg D.E."/>
            <person name="Porcella S.F."/>
            <person name="Zelazny A.M."/>
            <person name="Virtaneva K."/>
            <person name="Sturdevant D.E."/>
            <person name="Kupko J.J. III"/>
            <person name="Barbian K.D."/>
            <person name="Babar A."/>
            <person name="Dorward D.W."/>
            <person name="Holland S.M."/>
        </authorList>
    </citation>
    <scope>NUCLEOTIDE SEQUENCE [LARGE SCALE GENOMIC DNA]</scope>
    <source>
        <strain>ATCC BAA-1260 / CGDNIH1</strain>
    </source>
</reference>